<feature type="chain" id="PRO_1000201835" description="Holliday junction branch migration complex subunit RuvB">
    <location>
        <begin position="1"/>
        <end position="333"/>
    </location>
</feature>
<feature type="region of interest" description="Large ATPase domain (RuvB-L)" evidence="1">
    <location>
        <begin position="1"/>
        <end position="182"/>
    </location>
</feature>
<feature type="region of interest" description="Small ATPAse domain (RuvB-S)" evidence="1">
    <location>
        <begin position="183"/>
        <end position="253"/>
    </location>
</feature>
<feature type="region of interest" description="Head domain (RuvB-H)" evidence="1">
    <location>
        <begin position="256"/>
        <end position="333"/>
    </location>
</feature>
<feature type="binding site" evidence="1">
    <location>
        <position position="21"/>
    </location>
    <ligand>
        <name>ATP</name>
        <dbReference type="ChEBI" id="CHEBI:30616"/>
    </ligand>
</feature>
<feature type="binding site" evidence="1">
    <location>
        <position position="22"/>
    </location>
    <ligand>
        <name>ATP</name>
        <dbReference type="ChEBI" id="CHEBI:30616"/>
    </ligand>
</feature>
<feature type="binding site" evidence="1">
    <location>
        <position position="63"/>
    </location>
    <ligand>
        <name>ATP</name>
        <dbReference type="ChEBI" id="CHEBI:30616"/>
    </ligand>
</feature>
<feature type="binding site" evidence="1">
    <location>
        <position position="66"/>
    </location>
    <ligand>
        <name>ATP</name>
        <dbReference type="ChEBI" id="CHEBI:30616"/>
    </ligand>
</feature>
<feature type="binding site" evidence="1">
    <location>
        <position position="67"/>
    </location>
    <ligand>
        <name>ATP</name>
        <dbReference type="ChEBI" id="CHEBI:30616"/>
    </ligand>
</feature>
<feature type="binding site" evidence="1">
    <location>
        <position position="67"/>
    </location>
    <ligand>
        <name>Mg(2+)</name>
        <dbReference type="ChEBI" id="CHEBI:18420"/>
    </ligand>
</feature>
<feature type="binding site" evidence="1">
    <location>
        <position position="68"/>
    </location>
    <ligand>
        <name>ATP</name>
        <dbReference type="ChEBI" id="CHEBI:30616"/>
    </ligand>
</feature>
<feature type="binding site" evidence="1">
    <location>
        <begin position="129"/>
        <end position="131"/>
    </location>
    <ligand>
        <name>ATP</name>
        <dbReference type="ChEBI" id="CHEBI:30616"/>
    </ligand>
</feature>
<feature type="binding site" evidence="1">
    <location>
        <position position="172"/>
    </location>
    <ligand>
        <name>ATP</name>
        <dbReference type="ChEBI" id="CHEBI:30616"/>
    </ligand>
</feature>
<feature type="binding site" evidence="1">
    <location>
        <position position="182"/>
    </location>
    <ligand>
        <name>ATP</name>
        <dbReference type="ChEBI" id="CHEBI:30616"/>
    </ligand>
</feature>
<feature type="binding site" evidence="1">
    <location>
        <position position="219"/>
    </location>
    <ligand>
        <name>ATP</name>
        <dbReference type="ChEBI" id="CHEBI:30616"/>
    </ligand>
</feature>
<feature type="binding site" evidence="1">
    <location>
        <position position="311"/>
    </location>
    <ligand>
        <name>DNA</name>
        <dbReference type="ChEBI" id="CHEBI:16991"/>
    </ligand>
</feature>
<feature type="binding site" evidence="1">
    <location>
        <position position="316"/>
    </location>
    <ligand>
        <name>DNA</name>
        <dbReference type="ChEBI" id="CHEBI:16991"/>
    </ligand>
</feature>
<reference key="1">
    <citation type="journal article" date="2011" name="J. Bacteriol.">
        <title>Complete genome sequence of the Thermophilic Bacterium Exiguobacterium sp. AT1b.</title>
        <authorList>
            <person name="Vishnivetskaya T.A."/>
            <person name="Lucas S."/>
            <person name="Copeland A."/>
            <person name="Lapidus A."/>
            <person name="Glavina del Rio T."/>
            <person name="Dalin E."/>
            <person name="Tice H."/>
            <person name="Bruce D.C."/>
            <person name="Goodwin L.A."/>
            <person name="Pitluck S."/>
            <person name="Saunders E."/>
            <person name="Brettin T."/>
            <person name="Detter C."/>
            <person name="Han C."/>
            <person name="Larimer F."/>
            <person name="Land M.L."/>
            <person name="Hauser L.J."/>
            <person name="Kyrpides N.C."/>
            <person name="Ovchinnikova G."/>
            <person name="Kathariou S."/>
            <person name="Ramaley R.F."/>
            <person name="Rodrigues D.F."/>
            <person name="Hendrix C."/>
            <person name="Richardson P."/>
            <person name="Tiedje J.M."/>
        </authorList>
    </citation>
    <scope>NUCLEOTIDE SEQUENCE [LARGE SCALE GENOMIC DNA]</scope>
    <source>
        <strain>ATCC BAA-1283 / AT1b</strain>
    </source>
</reference>
<proteinExistence type="inferred from homology"/>
<gene>
    <name evidence="1" type="primary">ruvB</name>
    <name type="ordered locus">EAT1b_2692</name>
</gene>
<keyword id="KW-0067">ATP-binding</keyword>
<keyword id="KW-0963">Cytoplasm</keyword>
<keyword id="KW-0227">DNA damage</keyword>
<keyword id="KW-0233">DNA recombination</keyword>
<keyword id="KW-0234">DNA repair</keyword>
<keyword id="KW-0238">DNA-binding</keyword>
<keyword id="KW-0378">Hydrolase</keyword>
<keyword id="KW-0547">Nucleotide-binding</keyword>
<evidence type="ECO:0000255" key="1">
    <source>
        <dbReference type="HAMAP-Rule" id="MF_00016"/>
    </source>
</evidence>
<sequence>MDERLLSQSHQQYEDSEEWSLRPQRFEQYIGQEKAKGNLSVFIQAAKLRSETLDHVLLYGPPGLGKTTLAQIIANEMGVGIKTTAGPAIERPGDLAAILSTLEPGDVLFIDEIHRLSRTIEEILYPAMEDYCLDIVYGQGEMARSVRIDLPPFTLVGATTRAGMLSAPLRDRFGVTLKLEYYETHELAAIVSRTAQLFRLSISPEASGAIAKRSRGTPRIANRLLRRVRDFAQVAGTKEIDPVLASDALDRLHVDALGLDEVDHRLLRAMVERFGGGPVGLETLAATIGEDAQTIEDVYEPYLLQQGFLQRTPRGRMITQFAKSHFGYEEEEE</sequence>
<dbReference type="EC" id="3.6.4.-" evidence="1"/>
<dbReference type="EMBL" id="CP001615">
    <property type="protein sequence ID" value="ACQ71608.1"/>
    <property type="molecule type" value="Genomic_DNA"/>
</dbReference>
<dbReference type="RefSeq" id="WP_015881167.1">
    <property type="nucleotide sequence ID" value="NC_012673.1"/>
</dbReference>
<dbReference type="SMR" id="C4L523"/>
<dbReference type="STRING" id="360911.EAT1b_2692"/>
<dbReference type="KEGG" id="eat:EAT1b_2692"/>
<dbReference type="eggNOG" id="COG2255">
    <property type="taxonomic scope" value="Bacteria"/>
</dbReference>
<dbReference type="HOGENOM" id="CLU_055599_1_0_9"/>
<dbReference type="OrthoDB" id="9804478at2"/>
<dbReference type="Proteomes" id="UP000000716">
    <property type="component" value="Chromosome"/>
</dbReference>
<dbReference type="GO" id="GO:0005737">
    <property type="term" value="C:cytoplasm"/>
    <property type="evidence" value="ECO:0007669"/>
    <property type="project" value="UniProtKB-SubCell"/>
</dbReference>
<dbReference type="GO" id="GO:0048476">
    <property type="term" value="C:Holliday junction resolvase complex"/>
    <property type="evidence" value="ECO:0007669"/>
    <property type="project" value="UniProtKB-UniRule"/>
</dbReference>
<dbReference type="GO" id="GO:0005524">
    <property type="term" value="F:ATP binding"/>
    <property type="evidence" value="ECO:0007669"/>
    <property type="project" value="UniProtKB-UniRule"/>
</dbReference>
<dbReference type="GO" id="GO:0016887">
    <property type="term" value="F:ATP hydrolysis activity"/>
    <property type="evidence" value="ECO:0007669"/>
    <property type="project" value="InterPro"/>
</dbReference>
<dbReference type="GO" id="GO:0000400">
    <property type="term" value="F:four-way junction DNA binding"/>
    <property type="evidence" value="ECO:0007669"/>
    <property type="project" value="UniProtKB-UniRule"/>
</dbReference>
<dbReference type="GO" id="GO:0009378">
    <property type="term" value="F:four-way junction helicase activity"/>
    <property type="evidence" value="ECO:0007669"/>
    <property type="project" value="InterPro"/>
</dbReference>
<dbReference type="GO" id="GO:0006310">
    <property type="term" value="P:DNA recombination"/>
    <property type="evidence" value="ECO:0007669"/>
    <property type="project" value="UniProtKB-UniRule"/>
</dbReference>
<dbReference type="GO" id="GO:0006281">
    <property type="term" value="P:DNA repair"/>
    <property type="evidence" value="ECO:0007669"/>
    <property type="project" value="UniProtKB-UniRule"/>
</dbReference>
<dbReference type="CDD" id="cd00009">
    <property type="entry name" value="AAA"/>
    <property type="match status" value="1"/>
</dbReference>
<dbReference type="Gene3D" id="1.10.8.60">
    <property type="match status" value="1"/>
</dbReference>
<dbReference type="Gene3D" id="3.40.50.300">
    <property type="entry name" value="P-loop containing nucleotide triphosphate hydrolases"/>
    <property type="match status" value="1"/>
</dbReference>
<dbReference type="Gene3D" id="1.10.10.10">
    <property type="entry name" value="Winged helix-like DNA-binding domain superfamily/Winged helix DNA-binding domain"/>
    <property type="match status" value="1"/>
</dbReference>
<dbReference type="HAMAP" id="MF_00016">
    <property type="entry name" value="DNA_HJ_migration_RuvB"/>
    <property type="match status" value="1"/>
</dbReference>
<dbReference type="InterPro" id="IPR003593">
    <property type="entry name" value="AAA+_ATPase"/>
</dbReference>
<dbReference type="InterPro" id="IPR041445">
    <property type="entry name" value="AAA_lid_4"/>
</dbReference>
<dbReference type="InterPro" id="IPR004605">
    <property type="entry name" value="DNA_helicase_Holl-junc_RuvB"/>
</dbReference>
<dbReference type="InterPro" id="IPR027417">
    <property type="entry name" value="P-loop_NTPase"/>
</dbReference>
<dbReference type="InterPro" id="IPR008824">
    <property type="entry name" value="RuvB-like_N"/>
</dbReference>
<dbReference type="InterPro" id="IPR008823">
    <property type="entry name" value="RuvB_C"/>
</dbReference>
<dbReference type="InterPro" id="IPR036388">
    <property type="entry name" value="WH-like_DNA-bd_sf"/>
</dbReference>
<dbReference type="InterPro" id="IPR036390">
    <property type="entry name" value="WH_DNA-bd_sf"/>
</dbReference>
<dbReference type="NCBIfam" id="NF000868">
    <property type="entry name" value="PRK00080.1"/>
    <property type="match status" value="1"/>
</dbReference>
<dbReference type="NCBIfam" id="TIGR00635">
    <property type="entry name" value="ruvB"/>
    <property type="match status" value="1"/>
</dbReference>
<dbReference type="PANTHER" id="PTHR42848">
    <property type="match status" value="1"/>
</dbReference>
<dbReference type="PANTHER" id="PTHR42848:SF1">
    <property type="entry name" value="HOLLIDAY JUNCTION BRANCH MIGRATION COMPLEX SUBUNIT RUVB"/>
    <property type="match status" value="1"/>
</dbReference>
<dbReference type="Pfam" id="PF17864">
    <property type="entry name" value="AAA_lid_4"/>
    <property type="match status" value="1"/>
</dbReference>
<dbReference type="Pfam" id="PF05491">
    <property type="entry name" value="RuvB_C"/>
    <property type="match status" value="1"/>
</dbReference>
<dbReference type="Pfam" id="PF05496">
    <property type="entry name" value="RuvB_N"/>
    <property type="match status" value="1"/>
</dbReference>
<dbReference type="SMART" id="SM00382">
    <property type="entry name" value="AAA"/>
    <property type="match status" value="1"/>
</dbReference>
<dbReference type="SUPFAM" id="SSF52540">
    <property type="entry name" value="P-loop containing nucleoside triphosphate hydrolases"/>
    <property type="match status" value="1"/>
</dbReference>
<dbReference type="SUPFAM" id="SSF46785">
    <property type="entry name" value="Winged helix' DNA-binding domain"/>
    <property type="match status" value="1"/>
</dbReference>
<name>RUVB_EXISA</name>
<accession>C4L523</accession>
<organism>
    <name type="scientific">Exiguobacterium sp. (strain ATCC BAA-1283 / AT1b)</name>
    <dbReference type="NCBI Taxonomy" id="360911"/>
    <lineage>
        <taxon>Bacteria</taxon>
        <taxon>Bacillati</taxon>
        <taxon>Bacillota</taxon>
        <taxon>Bacilli</taxon>
        <taxon>Bacillales</taxon>
        <taxon>Bacillales Family XII. Incertae Sedis</taxon>
        <taxon>Exiguobacterium</taxon>
    </lineage>
</organism>
<comment type="function">
    <text evidence="1">The RuvA-RuvB-RuvC complex processes Holliday junction (HJ) DNA during genetic recombination and DNA repair, while the RuvA-RuvB complex plays an important role in the rescue of blocked DNA replication forks via replication fork reversal (RFR). RuvA specifically binds to HJ cruciform DNA, conferring on it an open structure. The RuvB hexamer acts as an ATP-dependent pump, pulling dsDNA into and through the RuvAB complex. RuvB forms 2 homohexamers on either side of HJ DNA bound by 1 or 2 RuvA tetramers; 4 subunits per hexamer contact DNA at a time. Coordinated motions by a converter formed by DNA-disengaged RuvB subunits stimulates ATP hydrolysis and nucleotide exchange. Immobilization of the converter enables RuvB to convert the ATP-contained energy into a lever motion, pulling 2 nucleotides of DNA out of the RuvA tetramer per ATP hydrolyzed, thus driving DNA branch migration. The RuvB motors rotate together with the DNA substrate, which together with the progressing nucleotide cycle form the mechanistic basis for DNA recombination by continuous HJ branch migration. Branch migration allows RuvC to scan DNA until it finds its consensus sequence, where it cleaves and resolves cruciform DNA.</text>
</comment>
<comment type="catalytic activity">
    <reaction evidence="1">
        <text>ATP + H2O = ADP + phosphate + H(+)</text>
        <dbReference type="Rhea" id="RHEA:13065"/>
        <dbReference type="ChEBI" id="CHEBI:15377"/>
        <dbReference type="ChEBI" id="CHEBI:15378"/>
        <dbReference type="ChEBI" id="CHEBI:30616"/>
        <dbReference type="ChEBI" id="CHEBI:43474"/>
        <dbReference type="ChEBI" id="CHEBI:456216"/>
    </reaction>
</comment>
<comment type="subunit">
    <text evidence="1">Homohexamer. Forms an RuvA(8)-RuvB(12)-Holliday junction (HJ) complex. HJ DNA is sandwiched between 2 RuvA tetramers; dsDNA enters through RuvA and exits via RuvB. An RuvB hexamer assembles on each DNA strand where it exits the tetramer. Each RuvB hexamer is contacted by two RuvA subunits (via domain III) on 2 adjacent RuvB subunits; this complex drives branch migration. In the full resolvosome a probable DNA-RuvA(4)-RuvB(12)-RuvC(2) complex forms which resolves the HJ.</text>
</comment>
<comment type="subcellular location">
    <subcellularLocation>
        <location evidence="1">Cytoplasm</location>
    </subcellularLocation>
</comment>
<comment type="domain">
    <text evidence="1">Has 3 domains, the large (RuvB-L) and small ATPase (RuvB-S) domains and the C-terminal head (RuvB-H) domain. The head domain binds DNA, while the ATPase domains jointly bind ATP, ADP or are empty depending on the state of the subunit in the translocation cycle. During a single DNA translocation step the structure of each domain remains the same, but their relative positions change.</text>
</comment>
<comment type="similarity">
    <text evidence="1">Belongs to the RuvB family.</text>
</comment>
<protein>
    <recommendedName>
        <fullName evidence="1">Holliday junction branch migration complex subunit RuvB</fullName>
        <ecNumber evidence="1">3.6.4.-</ecNumber>
    </recommendedName>
</protein>